<dbReference type="EC" id="3.1.-.-" evidence="1"/>
<dbReference type="EMBL" id="CP000227">
    <property type="protein sequence ID" value="ACM11723.1"/>
    <property type="molecule type" value="Genomic_DNA"/>
</dbReference>
<dbReference type="SMR" id="B9IU27"/>
<dbReference type="KEGG" id="bcq:BCQ_1293"/>
<dbReference type="HOGENOM" id="CLU_132020_0_0_9"/>
<dbReference type="Proteomes" id="UP000000441">
    <property type="component" value="Chromosome"/>
</dbReference>
<dbReference type="GO" id="GO:0016788">
    <property type="term" value="F:hydrolase activity, acting on ester bonds"/>
    <property type="evidence" value="ECO:0007669"/>
    <property type="project" value="UniProtKB-UniRule"/>
</dbReference>
<dbReference type="Gene3D" id="3.90.1140.10">
    <property type="entry name" value="Cyclic phosphodiesterase"/>
    <property type="match status" value="1"/>
</dbReference>
<dbReference type="HAMAP" id="MF_01444">
    <property type="entry name" value="2H_phosphoesterase_YjcG"/>
    <property type="match status" value="1"/>
</dbReference>
<dbReference type="InterPro" id="IPR050580">
    <property type="entry name" value="2H_phosphoesterase_YjcG-like"/>
</dbReference>
<dbReference type="InterPro" id="IPR009097">
    <property type="entry name" value="Cyclic_Pdiesterase"/>
</dbReference>
<dbReference type="InterPro" id="IPR022932">
    <property type="entry name" value="YjcG"/>
</dbReference>
<dbReference type="NCBIfam" id="NF010223">
    <property type="entry name" value="PRK13679.1"/>
    <property type="match status" value="1"/>
</dbReference>
<dbReference type="PANTHER" id="PTHR40037:SF1">
    <property type="entry name" value="PHOSPHOESTERASE SAOUHSC_00951-RELATED"/>
    <property type="match status" value="1"/>
</dbReference>
<dbReference type="PANTHER" id="PTHR40037">
    <property type="entry name" value="PHOSPHOESTERASE YJCG-RELATED"/>
    <property type="match status" value="1"/>
</dbReference>
<dbReference type="Pfam" id="PF13563">
    <property type="entry name" value="2_5_RNA_ligase2"/>
    <property type="match status" value="1"/>
</dbReference>
<dbReference type="SUPFAM" id="SSF55144">
    <property type="entry name" value="LigT-like"/>
    <property type="match status" value="1"/>
</dbReference>
<reference key="1">
    <citation type="journal article" date="2009" name="J. Bacteriol.">
        <title>Complete genome sequence of the extremophilic Bacillus cereus strain Q1 with industrial applications.</title>
        <authorList>
            <person name="Xiong Z."/>
            <person name="Jiang Y."/>
            <person name="Qi D."/>
            <person name="Lu H."/>
            <person name="Yang F."/>
            <person name="Yang J."/>
            <person name="Chen L."/>
            <person name="Sun L."/>
            <person name="Xu X."/>
            <person name="Xue Y."/>
            <person name="Zhu Y."/>
            <person name="Jin Q."/>
        </authorList>
    </citation>
    <scope>NUCLEOTIDE SEQUENCE [LARGE SCALE GENOMIC DNA]</scope>
    <source>
        <strain>Q1</strain>
    </source>
</reference>
<name>Y1293_BACCQ</name>
<gene>
    <name type="ordered locus">BCQ_1293</name>
</gene>
<protein>
    <recommendedName>
        <fullName evidence="1">Putative phosphoesterase BCQ_1293</fullName>
        <ecNumber evidence="1">3.1.-.-</ecNumber>
    </recommendedName>
</protein>
<accession>B9IU27</accession>
<sequence>MKLGIVIFPSKMIQDKANGLRKRYDPHYALVPPHITLKTPFETQDEQLESIVNELHTIASKTNPFTLHVGKVGSFAPVNNVIYFKVEKTPELTFLNEEMHSGFFTQEREYAFVPHLTIGQGLSDAEHADVLGRLRMKDFYYEQPIDRFHLLYQLENGTWTVHETFRLGKGNN</sequence>
<feature type="chain" id="PRO_1000184948" description="Putative phosphoesterase BCQ_1293">
    <location>
        <begin position="1"/>
        <end position="172"/>
    </location>
</feature>
<feature type="short sequence motif" description="HXTX 1" evidence="1">
    <location>
        <begin position="34"/>
        <end position="37"/>
    </location>
</feature>
<feature type="short sequence motif" description="HXTX 2" evidence="1">
    <location>
        <begin position="115"/>
        <end position="118"/>
    </location>
</feature>
<feature type="active site" description="Proton donor" evidence="1">
    <location>
        <position position="34"/>
    </location>
</feature>
<feature type="active site" description="Proton acceptor" evidence="1">
    <location>
        <position position="115"/>
    </location>
</feature>
<organism>
    <name type="scientific">Bacillus cereus (strain Q1)</name>
    <dbReference type="NCBI Taxonomy" id="361100"/>
    <lineage>
        <taxon>Bacteria</taxon>
        <taxon>Bacillati</taxon>
        <taxon>Bacillota</taxon>
        <taxon>Bacilli</taxon>
        <taxon>Bacillales</taxon>
        <taxon>Bacillaceae</taxon>
        <taxon>Bacillus</taxon>
        <taxon>Bacillus cereus group</taxon>
    </lineage>
</organism>
<proteinExistence type="inferred from homology"/>
<comment type="similarity">
    <text evidence="1">Belongs to the 2H phosphoesterase superfamily. YjcG family.</text>
</comment>
<evidence type="ECO:0000255" key="1">
    <source>
        <dbReference type="HAMAP-Rule" id="MF_01444"/>
    </source>
</evidence>
<keyword id="KW-0378">Hydrolase</keyword>